<reference key="1">
    <citation type="journal article" date="1988" name="J. Bacteriol.">
        <title>Complete nucleotide sequence of the Streptomyces lividans plasmid pIJ101 and correlation of the sequence with genetic properties.</title>
        <authorList>
            <person name="Kendall K.J."/>
            <person name="Cohen S.N."/>
        </authorList>
    </citation>
    <scope>NUCLEOTIDE SEQUENCE [GENOMIC DNA]</scope>
</reference>
<accession>P22401</accession>
<organism>
    <name type="scientific">Streptomyces lividans</name>
    <dbReference type="NCBI Taxonomy" id="1916"/>
    <lineage>
        <taxon>Bacteria</taxon>
        <taxon>Bacillati</taxon>
        <taxon>Actinomycetota</taxon>
        <taxon>Actinomycetes</taxon>
        <taxon>Kitasatosporales</taxon>
        <taxon>Streptomycetaceae</taxon>
        <taxon>Streptomyces</taxon>
    </lineage>
</organism>
<name>Y7KD_STRLI</name>
<protein>
    <recommendedName>
        <fullName>Uncharacterized 6.6 kDa protein</fullName>
    </recommendedName>
    <alternativeName>
        <fullName>ORF66</fullName>
    </alternativeName>
</protein>
<feature type="chain" id="PRO_0000066096" description="Uncharacterized 6.6 kDa protein">
    <location>
        <begin position="1"/>
        <end position="66"/>
    </location>
</feature>
<feature type="region of interest" description="Hydrophobic">
    <location>
        <begin position="1"/>
        <end position="20"/>
    </location>
</feature>
<dbReference type="EMBL" id="M21778">
    <property type="protein sequence ID" value="AAA88407.1"/>
    <property type="molecule type" value="Genomic_DNA"/>
</dbReference>
<dbReference type="PIR" id="D31844">
    <property type="entry name" value="D31844"/>
</dbReference>
<dbReference type="RefSeq" id="NP_040444.1">
    <property type="nucleotide sequence ID" value="NC_001387.1"/>
</dbReference>
<dbReference type="RefSeq" id="WP_010889916.1">
    <property type="nucleotide sequence ID" value="NC_001387.1"/>
</dbReference>
<dbReference type="SMR" id="P22401"/>
<sequence>MIALAYLATVAIAAMVLAVALRRRPTPTNPPAPAPAPALAAVDGGAEIRVILAATHQLAARLSTAA</sequence>
<keyword id="KW-0614">Plasmid</keyword>
<proteinExistence type="predicted"/>
<geneLocation type="plasmid">
    <name>pIJ101</name>
</geneLocation>